<sequence>MTTKGTPSRRAARALAFQILYGLGFSPAASVKQLREAYASSPDVADKGRSPQPEGFAWELIEGIWTEQANIDEVIGLFSQNWRIDRIGRVELTLLRIAVYEMLYRIDVPPKVAINEALELSKQFGDANARGFINGILDAAAKALEGGQLKPRV</sequence>
<comment type="function">
    <text evidence="1">Involved in transcription antitermination. Required for transcription of ribosomal RNA (rRNA) genes. Binds specifically to the boxA antiterminator sequence of the ribosomal RNA (rrn) operons.</text>
</comment>
<comment type="similarity">
    <text evidence="1">Belongs to the NusB family.</text>
</comment>
<protein>
    <recommendedName>
        <fullName evidence="1">Transcription antitermination protein NusB</fullName>
    </recommendedName>
    <alternativeName>
        <fullName evidence="1">Antitermination factor NusB</fullName>
    </alternativeName>
</protein>
<accession>Q72CT6</accession>
<name>NUSB_NITV2</name>
<organism>
    <name type="scientific">Nitratidesulfovibrio vulgaris (strain ATCC 29579 / DSM 644 / CCUG 34227 / NCIMB 8303 / VKM B-1760 / Hildenborough)</name>
    <name type="common">Desulfovibrio vulgaris</name>
    <dbReference type="NCBI Taxonomy" id="882"/>
    <lineage>
        <taxon>Bacteria</taxon>
        <taxon>Pseudomonadati</taxon>
        <taxon>Thermodesulfobacteriota</taxon>
        <taxon>Desulfovibrionia</taxon>
        <taxon>Desulfovibrionales</taxon>
        <taxon>Desulfovibrionaceae</taxon>
        <taxon>Nitratidesulfovibrio</taxon>
    </lineage>
</organism>
<reference key="1">
    <citation type="journal article" date="2004" name="Nat. Biotechnol.">
        <title>The genome sequence of the anaerobic, sulfate-reducing bacterium Desulfovibrio vulgaris Hildenborough.</title>
        <authorList>
            <person name="Heidelberg J.F."/>
            <person name="Seshadri R."/>
            <person name="Haveman S.A."/>
            <person name="Hemme C.L."/>
            <person name="Paulsen I.T."/>
            <person name="Kolonay J.F."/>
            <person name="Eisen J.A."/>
            <person name="Ward N.L."/>
            <person name="Methe B.A."/>
            <person name="Brinkac L.M."/>
            <person name="Daugherty S.C."/>
            <person name="DeBoy R.T."/>
            <person name="Dodson R.J."/>
            <person name="Durkin A.S."/>
            <person name="Madupu R."/>
            <person name="Nelson W.C."/>
            <person name="Sullivan S.A."/>
            <person name="Fouts D.E."/>
            <person name="Haft D.H."/>
            <person name="Selengut J."/>
            <person name="Peterson J.D."/>
            <person name="Davidsen T.M."/>
            <person name="Zafar N."/>
            <person name="Zhou L."/>
            <person name="Radune D."/>
            <person name="Dimitrov G."/>
            <person name="Hance M."/>
            <person name="Tran K."/>
            <person name="Khouri H.M."/>
            <person name="Gill J."/>
            <person name="Utterback T.R."/>
            <person name="Feldblyum T.V."/>
            <person name="Wall J.D."/>
            <person name="Voordouw G."/>
            <person name="Fraser C.M."/>
        </authorList>
    </citation>
    <scope>NUCLEOTIDE SEQUENCE [LARGE SCALE GENOMIC DNA]</scope>
    <source>
        <strain>ATCC 29579 / DSM 644 / CCUG 34227 / NCIMB 8303 / VKM B-1760 / Hildenborough</strain>
    </source>
</reference>
<dbReference type="EMBL" id="AE017285">
    <property type="protein sequence ID" value="AAS95675.1"/>
    <property type="molecule type" value="Genomic_DNA"/>
</dbReference>
<dbReference type="RefSeq" id="WP_010938493.1">
    <property type="nucleotide sequence ID" value="NC_002937.3"/>
</dbReference>
<dbReference type="RefSeq" id="YP_010416.1">
    <property type="nucleotide sequence ID" value="NC_002937.3"/>
</dbReference>
<dbReference type="SMR" id="Q72CT6"/>
<dbReference type="IntAct" id="Q72CT6">
    <property type="interactions" value="1"/>
</dbReference>
<dbReference type="STRING" id="882.DVU_1197"/>
<dbReference type="PaxDb" id="882-DVU_1197"/>
<dbReference type="EnsemblBacteria" id="AAS95675">
    <property type="protein sequence ID" value="AAS95675"/>
    <property type="gene ID" value="DVU_1197"/>
</dbReference>
<dbReference type="KEGG" id="dvu:DVU_1197"/>
<dbReference type="PATRIC" id="fig|882.5.peg.1121"/>
<dbReference type="eggNOG" id="COG0781">
    <property type="taxonomic scope" value="Bacteria"/>
</dbReference>
<dbReference type="HOGENOM" id="CLU_087843_3_1_7"/>
<dbReference type="OrthoDB" id="9797817at2"/>
<dbReference type="PhylomeDB" id="Q72CT6"/>
<dbReference type="Proteomes" id="UP000002194">
    <property type="component" value="Chromosome"/>
</dbReference>
<dbReference type="GO" id="GO:0005829">
    <property type="term" value="C:cytosol"/>
    <property type="evidence" value="ECO:0007669"/>
    <property type="project" value="TreeGrafter"/>
</dbReference>
<dbReference type="GO" id="GO:0003723">
    <property type="term" value="F:RNA binding"/>
    <property type="evidence" value="ECO:0007669"/>
    <property type="project" value="UniProtKB-UniRule"/>
</dbReference>
<dbReference type="GO" id="GO:0006353">
    <property type="term" value="P:DNA-templated transcription termination"/>
    <property type="evidence" value="ECO:0007669"/>
    <property type="project" value="UniProtKB-UniRule"/>
</dbReference>
<dbReference type="GO" id="GO:0031564">
    <property type="term" value="P:transcription antitermination"/>
    <property type="evidence" value="ECO:0007669"/>
    <property type="project" value="UniProtKB-KW"/>
</dbReference>
<dbReference type="Gene3D" id="1.10.940.10">
    <property type="entry name" value="NusB-like"/>
    <property type="match status" value="1"/>
</dbReference>
<dbReference type="HAMAP" id="MF_00073">
    <property type="entry name" value="NusB"/>
    <property type="match status" value="1"/>
</dbReference>
<dbReference type="InterPro" id="IPR035926">
    <property type="entry name" value="NusB-like_sf"/>
</dbReference>
<dbReference type="InterPro" id="IPR011605">
    <property type="entry name" value="NusB_fam"/>
</dbReference>
<dbReference type="InterPro" id="IPR006027">
    <property type="entry name" value="NusB_RsmB_TIM44"/>
</dbReference>
<dbReference type="NCBIfam" id="TIGR01951">
    <property type="entry name" value="nusB"/>
    <property type="match status" value="1"/>
</dbReference>
<dbReference type="PANTHER" id="PTHR11078:SF3">
    <property type="entry name" value="ANTITERMINATION NUSB DOMAIN-CONTAINING PROTEIN"/>
    <property type="match status" value="1"/>
</dbReference>
<dbReference type="PANTHER" id="PTHR11078">
    <property type="entry name" value="N UTILIZATION SUBSTANCE PROTEIN B-RELATED"/>
    <property type="match status" value="1"/>
</dbReference>
<dbReference type="Pfam" id="PF01029">
    <property type="entry name" value="NusB"/>
    <property type="match status" value="1"/>
</dbReference>
<dbReference type="SUPFAM" id="SSF48013">
    <property type="entry name" value="NusB-like"/>
    <property type="match status" value="1"/>
</dbReference>
<evidence type="ECO:0000255" key="1">
    <source>
        <dbReference type="HAMAP-Rule" id="MF_00073"/>
    </source>
</evidence>
<proteinExistence type="inferred from homology"/>
<keyword id="KW-1185">Reference proteome</keyword>
<keyword id="KW-0694">RNA-binding</keyword>
<keyword id="KW-0804">Transcription</keyword>
<keyword id="KW-0889">Transcription antitermination</keyword>
<keyword id="KW-0805">Transcription regulation</keyword>
<feature type="chain" id="PRO_0000265518" description="Transcription antitermination protein NusB">
    <location>
        <begin position="1"/>
        <end position="153"/>
    </location>
</feature>
<gene>
    <name evidence="1" type="primary">nusB</name>
    <name type="ordered locus">DVU_1197</name>
</gene>